<gene>
    <name evidence="9" type="primary">let-607</name>
    <name evidence="9" type="ORF">F57B10.1</name>
</gene>
<evidence type="ECO:0000255" key="1"/>
<evidence type="ECO:0000255" key="2">
    <source>
        <dbReference type="PROSITE-ProRule" id="PRU00978"/>
    </source>
</evidence>
<evidence type="ECO:0000256" key="3">
    <source>
        <dbReference type="SAM" id="MobiDB-lite"/>
    </source>
</evidence>
<evidence type="ECO:0000269" key="4">
    <source>
    </source>
</evidence>
<evidence type="ECO:0000269" key="5">
    <source>
    </source>
</evidence>
<evidence type="ECO:0000303" key="6">
    <source>
    </source>
</evidence>
<evidence type="ECO:0000305" key="7"/>
<evidence type="ECO:0000312" key="8">
    <source>
        <dbReference type="Proteomes" id="UP000001940"/>
    </source>
</evidence>
<evidence type="ECO:0000312" key="9">
    <source>
        <dbReference type="WormBase" id="F57B10.1"/>
    </source>
</evidence>
<dbReference type="EMBL" id="BX284601">
    <property type="protein sequence ID" value="CCD71470.1"/>
    <property type="molecule type" value="Genomic_DNA"/>
</dbReference>
<dbReference type="PIR" id="T32750">
    <property type="entry name" value="T32750"/>
</dbReference>
<dbReference type="RefSeq" id="NP_491897.2">
    <property type="nucleotide sequence ID" value="NM_059496.9"/>
</dbReference>
<dbReference type="SMR" id="O44743"/>
<dbReference type="FunCoup" id="O44743">
    <property type="interactions" value="250"/>
</dbReference>
<dbReference type="IntAct" id="O44743">
    <property type="interactions" value="4"/>
</dbReference>
<dbReference type="STRING" id="6239.F57B10.1.2"/>
<dbReference type="PaxDb" id="6239-F57B10.1.1"/>
<dbReference type="PeptideAtlas" id="O44743"/>
<dbReference type="EnsemblMetazoa" id="F57B10.1.1">
    <property type="protein sequence ID" value="F57B10.1.1"/>
    <property type="gene ID" value="WBGene00002783"/>
</dbReference>
<dbReference type="EnsemblMetazoa" id="F57B10.1.2">
    <property type="protein sequence ID" value="F57B10.1.2"/>
    <property type="gene ID" value="WBGene00002783"/>
</dbReference>
<dbReference type="GeneID" id="266837"/>
<dbReference type="KEGG" id="cel:CELE_F57B10.1"/>
<dbReference type="UCSC" id="F57B10.1.1">
    <property type="organism name" value="c. elegans"/>
</dbReference>
<dbReference type="AGR" id="WB:WBGene00002783"/>
<dbReference type="CTD" id="266837"/>
<dbReference type="WormBase" id="F57B10.1">
    <property type="protein sequence ID" value="CE37244"/>
    <property type="gene ID" value="WBGene00002783"/>
    <property type="gene designation" value="let-607"/>
</dbReference>
<dbReference type="eggNOG" id="KOG0709">
    <property type="taxonomic scope" value="Eukaryota"/>
</dbReference>
<dbReference type="HOGENOM" id="CLU_401277_0_0_1"/>
<dbReference type="InParanoid" id="O44743"/>
<dbReference type="OMA" id="FEDQCDA"/>
<dbReference type="OrthoDB" id="674948at2759"/>
<dbReference type="Reactome" id="R-CEL-8874211">
    <property type="pathway name" value="CREB3 factors activate genes"/>
</dbReference>
<dbReference type="SignaLink" id="O44743"/>
<dbReference type="PRO" id="PR:O44743"/>
<dbReference type="Proteomes" id="UP000001940">
    <property type="component" value="Chromosome I"/>
</dbReference>
<dbReference type="Bgee" id="WBGene00002783">
    <property type="expression patterns" value="Expressed in pharyngeal muscle cell (C elegans) and 4 other cell types or tissues"/>
</dbReference>
<dbReference type="GO" id="GO:0000785">
    <property type="term" value="C:chromatin"/>
    <property type="evidence" value="ECO:0000315"/>
    <property type="project" value="UniProtKB"/>
</dbReference>
<dbReference type="GO" id="GO:0005634">
    <property type="term" value="C:nucleus"/>
    <property type="evidence" value="ECO:0000318"/>
    <property type="project" value="GO_Central"/>
</dbReference>
<dbReference type="GO" id="GO:0000981">
    <property type="term" value="F:DNA-binding transcription factor activity, RNA polymerase II-specific"/>
    <property type="evidence" value="ECO:0000318"/>
    <property type="project" value="GO_Central"/>
</dbReference>
<dbReference type="GO" id="GO:0000978">
    <property type="term" value="F:RNA polymerase II cis-regulatory region sequence-specific DNA binding"/>
    <property type="evidence" value="ECO:0000315"/>
    <property type="project" value="UniProtKB"/>
</dbReference>
<dbReference type="GO" id="GO:0036498">
    <property type="term" value="P:IRE1-mediated unfolded protein response"/>
    <property type="evidence" value="ECO:0007007"/>
    <property type="project" value="WormBase"/>
</dbReference>
<dbReference type="GO" id="GO:0006457">
    <property type="term" value="P:protein folding"/>
    <property type="evidence" value="ECO:0000315"/>
    <property type="project" value="WormBase"/>
</dbReference>
<dbReference type="GO" id="GO:0008361">
    <property type="term" value="P:regulation of cell size"/>
    <property type="evidence" value="ECO:0000315"/>
    <property type="project" value="WormBase"/>
</dbReference>
<dbReference type="GO" id="GO:1903354">
    <property type="term" value="P:regulation of distal tip cell migration"/>
    <property type="evidence" value="ECO:0000315"/>
    <property type="project" value="UniProtKB"/>
</dbReference>
<dbReference type="GO" id="GO:2000114">
    <property type="term" value="P:regulation of establishment of cell polarity"/>
    <property type="evidence" value="ECO:0000316"/>
    <property type="project" value="WormBase"/>
</dbReference>
<dbReference type="GO" id="GO:1903894">
    <property type="term" value="P:regulation of IRE1-mediated unfolded protein response"/>
    <property type="evidence" value="ECO:0000314"/>
    <property type="project" value="WormBase"/>
</dbReference>
<dbReference type="GO" id="GO:0040014">
    <property type="term" value="P:regulation of multicellular organism growth"/>
    <property type="evidence" value="ECO:0000315"/>
    <property type="project" value="WormBase"/>
</dbReference>
<dbReference type="GO" id="GO:0006357">
    <property type="term" value="P:regulation of transcription by RNA polymerase II"/>
    <property type="evidence" value="ECO:0000315"/>
    <property type="project" value="UniProtKB"/>
</dbReference>
<dbReference type="CDD" id="cd14689">
    <property type="entry name" value="bZIP_CREB3"/>
    <property type="match status" value="1"/>
</dbReference>
<dbReference type="Gene3D" id="1.20.5.170">
    <property type="match status" value="1"/>
</dbReference>
<dbReference type="InterPro" id="IPR004827">
    <property type="entry name" value="bZIP"/>
</dbReference>
<dbReference type="InterPro" id="IPR046347">
    <property type="entry name" value="bZIP_sf"/>
</dbReference>
<dbReference type="InterPro" id="IPR051381">
    <property type="entry name" value="CREB_ATF_subfamily"/>
</dbReference>
<dbReference type="PANTHER" id="PTHR45996">
    <property type="entry name" value="AGAP001464-PB"/>
    <property type="match status" value="1"/>
</dbReference>
<dbReference type="PANTHER" id="PTHR45996:SF3">
    <property type="entry name" value="CREB-H TRANSCRIPTION FACTOR HOMOLOG LET-607"/>
    <property type="match status" value="1"/>
</dbReference>
<dbReference type="Pfam" id="PF00170">
    <property type="entry name" value="bZIP_1"/>
    <property type="match status" value="1"/>
</dbReference>
<dbReference type="SMART" id="SM00338">
    <property type="entry name" value="BRLZ"/>
    <property type="match status" value="1"/>
</dbReference>
<dbReference type="SUPFAM" id="SSF57959">
    <property type="entry name" value="Leucine zipper domain"/>
    <property type="match status" value="1"/>
</dbReference>
<dbReference type="PROSITE" id="PS50217">
    <property type="entry name" value="BZIP"/>
    <property type="match status" value="1"/>
</dbReference>
<dbReference type="PROSITE" id="PS00036">
    <property type="entry name" value="BZIP_BASIC"/>
    <property type="match status" value="1"/>
</dbReference>
<proteinExistence type="evidence at transcript level"/>
<feature type="chain" id="PRO_0000452349" description="CREB-H transcription factor homolog let-607">
    <location>
        <begin position="1"/>
        <end position="690"/>
    </location>
</feature>
<feature type="domain" description="bZIP" evidence="2">
    <location>
        <begin position="284"/>
        <end position="347"/>
    </location>
</feature>
<feature type="region of interest" description="Disordered" evidence="3">
    <location>
        <begin position="87"/>
        <end position="118"/>
    </location>
</feature>
<feature type="region of interest" description="Disordered" evidence="3">
    <location>
        <begin position="166"/>
        <end position="192"/>
    </location>
</feature>
<feature type="region of interest" description="Disordered" evidence="3">
    <location>
        <begin position="205"/>
        <end position="253"/>
    </location>
</feature>
<feature type="region of interest" description="Basic motif" evidence="2">
    <location>
        <begin position="286"/>
        <end position="321"/>
    </location>
</feature>
<feature type="region of interest" description="Leucine-zipper" evidence="2">
    <location>
        <begin position="326"/>
        <end position="333"/>
    </location>
</feature>
<feature type="region of interest" description="Disordered" evidence="3">
    <location>
        <begin position="451"/>
        <end position="495"/>
    </location>
</feature>
<feature type="region of interest" description="Disordered" evidence="3">
    <location>
        <begin position="509"/>
        <end position="536"/>
    </location>
</feature>
<feature type="coiled-coil region" evidence="1">
    <location>
        <begin position="295"/>
        <end position="350"/>
    </location>
</feature>
<feature type="compositionally biased region" description="Low complexity" evidence="3">
    <location>
        <begin position="100"/>
        <end position="116"/>
    </location>
</feature>
<feature type="compositionally biased region" description="Low complexity" evidence="3">
    <location>
        <begin position="170"/>
        <end position="181"/>
    </location>
</feature>
<feature type="compositionally biased region" description="Low complexity" evidence="3">
    <location>
        <begin position="213"/>
        <end position="236"/>
    </location>
</feature>
<feature type="compositionally biased region" description="Polar residues" evidence="3">
    <location>
        <begin position="451"/>
        <end position="464"/>
    </location>
</feature>
<feature type="compositionally biased region" description="Low complexity" evidence="3">
    <location>
        <begin position="480"/>
        <end position="492"/>
    </location>
</feature>
<feature type="compositionally biased region" description="Low complexity" evidence="3">
    <location>
        <begin position="514"/>
        <end position="535"/>
    </location>
</feature>
<reference evidence="8" key="1">
    <citation type="journal article" date="1998" name="Science">
        <title>Genome sequence of the nematode C. elegans: a platform for investigating biology.</title>
        <authorList>
            <consortium name="The C. elegans sequencing consortium"/>
        </authorList>
    </citation>
    <scope>NUCLEOTIDE SEQUENCE [LARGE SCALE GENOMIC DNA]</scope>
    <source>
        <strain evidence="8">Bristol N2</strain>
    </source>
</reference>
<reference evidence="7" key="2">
    <citation type="journal article" date="2014" name="Dev. Dyn.">
        <title>Transcriptionally regulated cell adhesion network dictates distal tip cell directionality.</title>
        <authorList>
            <person name="Wong M.C."/>
            <person name="Kennedy W.P."/>
            <person name="Schwarzbauer J.E."/>
        </authorList>
    </citation>
    <scope>FUNCTION</scope>
    <scope>DEVELOPMENTAL STAGE</scope>
    <scope>DISRUPTION PHENOTYPE</scope>
</reference>
<reference evidence="7" key="3">
    <citation type="journal article" date="2016" name="Development">
        <title>A novel small molecule that disrupts a key event during the oocyte-to-embryo transition in C. elegans.</title>
        <authorList>
            <person name="Weicksel S.E."/>
            <person name="Mahadav A."/>
            <person name="Moyle M."/>
            <person name="Cipriani P.G."/>
            <person name="Kudron M."/>
            <person name="Pincus Z."/>
            <person name="Bahmanyar S."/>
            <person name="Abriola L."/>
            <person name="Merkel J."/>
            <person name="Gutwein M."/>
            <person name="Fernandez A.G."/>
            <person name="Piano F."/>
            <person name="Gunsalus K.C."/>
            <person name="Reinke V."/>
        </authorList>
    </citation>
    <scope>FUNCTION</scope>
    <scope>DISRUPTION PHENOTYPE</scope>
</reference>
<sequence>MDQDFDLDEGAGQFNLKTTLMMFTSNDSQNDDGIWSPGSPYQALEDPSFLDKHFVSDPDRYTADELYSALEKMDGKSDLIGMDDMDNDNCYSLSPPDSGSLPISPASTSPSSYHSSGGEDLMDCYPSIDILQQASEELLYSKDDDYEICSSGPLLAYTNANSVATSAVHQNQQQQQRRLNQAGFPHQNSNGLVRFKSSQPRVLNPASISLNAPSSSFNPQSTSSTPATSSSSSSSTNGGFVKSSTGERRKYPPLRLDEEEIKLCKKEGICLPDFFPLTKAEERDLKRIRRKIRNKRSAQTSRKRKQDYIEQLEDRVSESTKENQALKQQIERLSSENQSVISQLKKLQAQLGQNAKRTTQAGRCLAVFMLSACLLVSPQLSPLGNQDNQKVLECIEEACQPSATSMNSANSAQRAIAGVTAPSVVIPSGGPVMVSTNANRQMNRNAVLNHHNNSKYPASGNQNHHPIALEDLNHPPPTLQPKQSYQQQHQPSMYRRSDETIAMAMAKIGARKGSSTSSSSASSVASSTSTSSATSPIYRTSRTLGAFEDQCDASSDDSNCANMPSLVPMKMSAQPPKRKIVTMNGQPRVTYRAVPASSVNVEQAQYYKVPQQKVQYVTMDRPIKYEVLQLNDYIKMEEESTIRLPNSWSTAGPRLHPQVNASSRTVRPLTVATPVHYNGPSAKKIKTQMF</sequence>
<keyword id="KW-0175">Coiled coil</keyword>
<keyword id="KW-0217">Developmental protein</keyword>
<keyword id="KW-0238">DNA-binding</keyword>
<keyword id="KW-0539">Nucleus</keyword>
<keyword id="KW-1185">Reference proteome</keyword>
<keyword id="KW-0804">Transcription</keyword>
<keyword id="KW-0805">Transcription regulation</keyword>
<accession>O44743</accession>
<comment type="function">
    <text evidence="4 5">Probable transcription factor, required during migration of the gonadal distal tip cells (DTC) (PubMed:24811939). Probably regulates cell adhesion of DTCs via modulation of expression of genes involved in integrin-mediated adhesion, including tln-1, src-1, and integrin pat-2 (PubMed:24811939). Modulates expression of genes involved in protein trafficking during embryogenesis, including emo-1, sec-61, calu-1, sec-24.1, enpl-1, sar-1 and tfg-1 (PubMed:27510972).</text>
</comment>
<comment type="subcellular location">
    <subcellularLocation>
        <location evidence="2">Nucleus</location>
    </subcellularLocation>
</comment>
<comment type="developmental stage">
    <text evidence="4">Expressed in the gonadal distal tip cells (DTC) during larval stages L2, L3 and L4.</text>
</comment>
<comment type="disruption phenotype">
    <text evidence="4 5">RNAi-mediated knockdown targeted to the gonadal distal tip cells (DTC) causes DTC migration defects (PubMed:24811939). Significant reduction in expression of src-1 and tln-1 in DTCs (PubMed:24811939). Causes slow growth after hatching (PubMed:27510972).</text>
</comment>
<comment type="similarity">
    <text evidence="7">Belongs to the bZIP family.</text>
</comment>
<name>LE607_CAEEL</name>
<protein>
    <recommendedName>
        <fullName evidence="6">CREB-H transcription factor homolog let-607</fullName>
    </recommendedName>
    <alternativeName>
        <fullName evidence="9">Lethal 607 protein</fullName>
    </alternativeName>
</protein>
<organism evidence="8">
    <name type="scientific">Caenorhabditis elegans</name>
    <dbReference type="NCBI Taxonomy" id="6239"/>
    <lineage>
        <taxon>Eukaryota</taxon>
        <taxon>Metazoa</taxon>
        <taxon>Ecdysozoa</taxon>
        <taxon>Nematoda</taxon>
        <taxon>Chromadorea</taxon>
        <taxon>Rhabditida</taxon>
        <taxon>Rhabditina</taxon>
        <taxon>Rhabditomorpha</taxon>
        <taxon>Rhabditoidea</taxon>
        <taxon>Rhabditidae</taxon>
        <taxon>Peloderinae</taxon>
        <taxon>Caenorhabditis</taxon>
    </lineage>
</organism>